<feature type="chain" id="PRO_0000260274" description="Globin">
    <location>
        <begin position="1"/>
        <end position="147"/>
    </location>
</feature>
<feature type="domain" description="Globin" evidence="1">
    <location>
        <begin position="2"/>
        <end position="147"/>
    </location>
</feature>
<feature type="binding site" description="distal binding residue" evidence="1">
    <location>
        <position position="64"/>
    </location>
    <ligand>
        <name>heme b</name>
        <dbReference type="ChEBI" id="CHEBI:60344"/>
    </ligand>
    <ligandPart>
        <name>Fe</name>
        <dbReference type="ChEBI" id="CHEBI:18248"/>
    </ligandPart>
</feature>
<feature type="binding site" description="proximal binding residue" evidence="1">
    <location>
        <position position="95"/>
    </location>
    <ligand>
        <name>heme b</name>
        <dbReference type="ChEBI" id="CHEBI:60344"/>
    </ligand>
    <ligandPart>
        <name>Fe</name>
        <dbReference type="ChEBI" id="CHEBI:18248"/>
    </ligandPart>
</feature>
<name>GLB_AEQEI</name>
<comment type="subunit">
    <text evidence="2">Homodimer or homooligomer.</text>
</comment>
<comment type="miscellaneous">
    <text>Adapted to the low-temperature environment by a decrease in the oxygen affinity via an increased ligand-dissociation rate. At 2 degrees Celsius this hemoglobin has an oxygen affinity similar to other hemoglobins at 25 degrees Celsius.</text>
</comment>
<comment type="similarity">
    <text evidence="1">Belongs to the globin family.</text>
</comment>
<evidence type="ECO:0000255" key="1">
    <source>
        <dbReference type="PROSITE-ProRule" id="PRU00238"/>
    </source>
</evidence>
<evidence type="ECO:0000269" key="2">
    <source>
    </source>
</evidence>
<organism>
    <name type="scientific">Aequiyoldia eightsii</name>
    <name type="common">Antarctic yoldia</name>
    <name type="synonym">Yoldia eightsii</name>
    <dbReference type="NCBI Taxonomy" id="2716527"/>
    <lineage>
        <taxon>Eukaryota</taxon>
        <taxon>Metazoa</taxon>
        <taxon>Spiralia</taxon>
        <taxon>Lophotrochozoa</taxon>
        <taxon>Mollusca</taxon>
        <taxon>Bivalvia</taxon>
        <taxon>Protobranchia</taxon>
        <taxon>Nuculanida sp.</taxon>
        <taxon>Sareptidae</taxon>
        <taxon>Aequiyoldia</taxon>
    </lineage>
</organism>
<protein>
    <recommendedName>
        <fullName>Globin</fullName>
    </recommendedName>
</protein>
<reference key="1">
    <citation type="journal article" date="2003" name="Biochem. J.">
        <title>Structure and function of the globin and globin gene from the Antarctic mollusc Yoldia eightsi.</title>
        <authorList>
            <person name="Dewilde S."/>
            <person name="Angelini E."/>
            <person name="Kiger L."/>
            <person name="Marden M.C."/>
            <person name="Beltramini M."/>
            <person name="Salvato B."/>
            <person name="Moens L."/>
        </authorList>
    </citation>
    <scope>NUCLEOTIDE SEQUENCE [MRNA]</scope>
    <scope>SUBUNIT</scope>
</reference>
<dbReference type="EMBL" id="AF361744">
    <property type="protein sequence ID" value="AAM00251.1"/>
    <property type="molecule type" value="mRNA"/>
</dbReference>
<dbReference type="SMR" id="Q8T7J9"/>
<dbReference type="GO" id="GO:0005576">
    <property type="term" value="C:extracellular region"/>
    <property type="evidence" value="ECO:0007669"/>
    <property type="project" value="InterPro"/>
</dbReference>
<dbReference type="GO" id="GO:0005833">
    <property type="term" value="C:hemoglobin complex"/>
    <property type="evidence" value="ECO:0007669"/>
    <property type="project" value="InterPro"/>
</dbReference>
<dbReference type="GO" id="GO:0020037">
    <property type="term" value="F:heme binding"/>
    <property type="evidence" value="ECO:0007669"/>
    <property type="project" value="InterPro"/>
</dbReference>
<dbReference type="GO" id="GO:0046872">
    <property type="term" value="F:metal ion binding"/>
    <property type="evidence" value="ECO:0007669"/>
    <property type="project" value="UniProtKB-KW"/>
</dbReference>
<dbReference type="GO" id="GO:0019825">
    <property type="term" value="F:oxygen binding"/>
    <property type="evidence" value="ECO:0007669"/>
    <property type="project" value="InterPro"/>
</dbReference>
<dbReference type="GO" id="GO:0005344">
    <property type="term" value="F:oxygen carrier activity"/>
    <property type="evidence" value="ECO:0007669"/>
    <property type="project" value="UniProtKB-KW"/>
</dbReference>
<dbReference type="CDD" id="cd01040">
    <property type="entry name" value="Mb-like"/>
    <property type="match status" value="1"/>
</dbReference>
<dbReference type="Gene3D" id="1.10.490.10">
    <property type="entry name" value="Globins"/>
    <property type="match status" value="1"/>
</dbReference>
<dbReference type="InterPro" id="IPR002336">
    <property type="entry name" value="Erythrocruorin"/>
</dbReference>
<dbReference type="InterPro" id="IPR000971">
    <property type="entry name" value="Globin"/>
</dbReference>
<dbReference type="InterPro" id="IPR009050">
    <property type="entry name" value="Globin-like_sf"/>
</dbReference>
<dbReference type="InterPro" id="IPR012292">
    <property type="entry name" value="Globin/Proto"/>
</dbReference>
<dbReference type="InterPro" id="IPR044399">
    <property type="entry name" value="Mb-like_M"/>
</dbReference>
<dbReference type="PANTHER" id="PTHR47217">
    <property type="entry name" value="GLOBIN-LIKE PROTEIN"/>
    <property type="match status" value="1"/>
</dbReference>
<dbReference type="PANTHER" id="PTHR47217:SF1">
    <property type="entry name" value="GLOBIN-LIKE PROTEIN"/>
    <property type="match status" value="1"/>
</dbReference>
<dbReference type="Pfam" id="PF00042">
    <property type="entry name" value="Globin"/>
    <property type="match status" value="1"/>
</dbReference>
<dbReference type="PRINTS" id="PR00611">
    <property type="entry name" value="ERYTHCRUORIN"/>
</dbReference>
<dbReference type="SUPFAM" id="SSF46458">
    <property type="entry name" value="Globin-like"/>
    <property type="match status" value="1"/>
</dbReference>
<dbReference type="PROSITE" id="PS01033">
    <property type="entry name" value="GLOBIN"/>
    <property type="match status" value="1"/>
</dbReference>
<proteinExistence type="evidence at protein level"/>
<accession>Q8T7J9</accession>
<keyword id="KW-0349">Heme</keyword>
<keyword id="KW-0408">Iron</keyword>
<keyword id="KW-0479">Metal-binding</keyword>
<keyword id="KW-0514">Muscle protein</keyword>
<keyword id="KW-0561">Oxygen transport</keyword>
<keyword id="KW-0813">Transport</keyword>
<sequence>MSFSAAQVDTVRSNWCSMTADIDAAGYRIFELLFQRNPDYQSKFKAFKGLAVSALKGNPNAEKHIRIVLGGLGRILGALNTPELDVIYKEMASNHKPRGVMKQQFKDMGQAIVTALSEIQSKSGGSFDRATWEALFESVANGIGQYQ</sequence>